<reference key="1">
    <citation type="journal article" date="2008" name="BMC Genomics">
        <title>The genome sequence of the fish pathogen Aliivibrio salmonicida strain LFI1238 shows extensive evidence of gene decay.</title>
        <authorList>
            <person name="Hjerde E."/>
            <person name="Lorentzen M.S."/>
            <person name="Holden M.T."/>
            <person name="Seeger K."/>
            <person name="Paulsen S."/>
            <person name="Bason N."/>
            <person name="Churcher C."/>
            <person name="Harris D."/>
            <person name="Norbertczak H."/>
            <person name="Quail M.A."/>
            <person name="Sanders S."/>
            <person name="Thurston S."/>
            <person name="Parkhill J."/>
            <person name="Willassen N.P."/>
            <person name="Thomson N.R."/>
        </authorList>
    </citation>
    <scope>NUCLEOTIDE SEQUENCE [LARGE SCALE GENOMIC DNA]</scope>
    <source>
        <strain>LFI1238</strain>
    </source>
</reference>
<accession>B6EGX8</accession>
<protein>
    <recommendedName>
        <fullName evidence="1">Co-chaperone protein HscB homolog</fullName>
    </recommendedName>
</protein>
<organism>
    <name type="scientific">Aliivibrio salmonicida (strain LFI1238)</name>
    <name type="common">Vibrio salmonicida (strain LFI1238)</name>
    <dbReference type="NCBI Taxonomy" id="316275"/>
    <lineage>
        <taxon>Bacteria</taxon>
        <taxon>Pseudomonadati</taxon>
        <taxon>Pseudomonadota</taxon>
        <taxon>Gammaproteobacteria</taxon>
        <taxon>Vibrionales</taxon>
        <taxon>Vibrionaceae</taxon>
        <taxon>Aliivibrio</taxon>
    </lineage>
</organism>
<sequence length="171" mass="19782">MNHFELFGLPNQFELDGGLLSAQFLELQKRFHPDNFATSSERDRLLSVQKAAQINDAYQTLKNPVTRAEYILSEQGHDIRGEQTTMQDPMFLMQQMELREDLEDLLSSSDPESALFDFSENVSAMRKTQLAELKQQLESELWQEAAQSVRKLKFIDKLNQEVEKLEDKLLG</sequence>
<comment type="function">
    <text evidence="1">Co-chaperone involved in the maturation of iron-sulfur cluster-containing proteins. Seems to help targeting proteins to be folded toward HscA.</text>
</comment>
<comment type="subunit">
    <text evidence="1">Interacts with HscA and stimulates its ATPase activity.</text>
</comment>
<comment type="similarity">
    <text evidence="1">Belongs to the HscB family.</text>
</comment>
<keyword id="KW-0143">Chaperone</keyword>
<gene>
    <name evidence="1" type="primary">hscB</name>
    <name type="ordered locus">VSAL_I0720</name>
</gene>
<feature type="chain" id="PRO_1000131724" description="Co-chaperone protein HscB homolog">
    <location>
        <begin position="1"/>
        <end position="171"/>
    </location>
</feature>
<feature type="domain" description="J" evidence="1">
    <location>
        <begin position="2"/>
        <end position="74"/>
    </location>
</feature>
<dbReference type="EMBL" id="FM178379">
    <property type="protein sequence ID" value="CAQ78405.1"/>
    <property type="molecule type" value="Genomic_DNA"/>
</dbReference>
<dbReference type="RefSeq" id="WP_012549525.1">
    <property type="nucleotide sequence ID" value="NC_011312.1"/>
</dbReference>
<dbReference type="SMR" id="B6EGX8"/>
<dbReference type="KEGG" id="vsa:VSAL_I0720"/>
<dbReference type="eggNOG" id="COG1076">
    <property type="taxonomic scope" value="Bacteria"/>
</dbReference>
<dbReference type="HOGENOM" id="CLU_068529_2_0_6"/>
<dbReference type="Proteomes" id="UP000001730">
    <property type="component" value="Chromosome 1"/>
</dbReference>
<dbReference type="GO" id="GO:1990230">
    <property type="term" value="C:iron-sulfur cluster transfer complex"/>
    <property type="evidence" value="ECO:0007669"/>
    <property type="project" value="TreeGrafter"/>
</dbReference>
<dbReference type="GO" id="GO:0001671">
    <property type="term" value="F:ATPase activator activity"/>
    <property type="evidence" value="ECO:0007669"/>
    <property type="project" value="InterPro"/>
</dbReference>
<dbReference type="GO" id="GO:0051087">
    <property type="term" value="F:protein-folding chaperone binding"/>
    <property type="evidence" value="ECO:0007669"/>
    <property type="project" value="InterPro"/>
</dbReference>
<dbReference type="GO" id="GO:0044571">
    <property type="term" value="P:[2Fe-2S] cluster assembly"/>
    <property type="evidence" value="ECO:0007669"/>
    <property type="project" value="InterPro"/>
</dbReference>
<dbReference type="GO" id="GO:0051259">
    <property type="term" value="P:protein complex oligomerization"/>
    <property type="evidence" value="ECO:0007669"/>
    <property type="project" value="InterPro"/>
</dbReference>
<dbReference type="GO" id="GO:0006457">
    <property type="term" value="P:protein folding"/>
    <property type="evidence" value="ECO:0007669"/>
    <property type="project" value="UniProtKB-UniRule"/>
</dbReference>
<dbReference type="CDD" id="cd06257">
    <property type="entry name" value="DnaJ"/>
    <property type="match status" value="1"/>
</dbReference>
<dbReference type="Gene3D" id="1.10.287.110">
    <property type="entry name" value="DnaJ domain"/>
    <property type="match status" value="1"/>
</dbReference>
<dbReference type="Gene3D" id="1.20.1280.20">
    <property type="entry name" value="HscB, C-terminal domain"/>
    <property type="match status" value="1"/>
</dbReference>
<dbReference type="HAMAP" id="MF_00682">
    <property type="entry name" value="HscB"/>
    <property type="match status" value="1"/>
</dbReference>
<dbReference type="InterPro" id="IPR001623">
    <property type="entry name" value="DnaJ_domain"/>
</dbReference>
<dbReference type="InterPro" id="IPR004640">
    <property type="entry name" value="HscB"/>
</dbReference>
<dbReference type="InterPro" id="IPR036386">
    <property type="entry name" value="HscB_C_sf"/>
</dbReference>
<dbReference type="InterPro" id="IPR009073">
    <property type="entry name" value="HscB_oligo_C"/>
</dbReference>
<dbReference type="InterPro" id="IPR036869">
    <property type="entry name" value="J_dom_sf"/>
</dbReference>
<dbReference type="NCBIfam" id="TIGR00714">
    <property type="entry name" value="hscB"/>
    <property type="match status" value="1"/>
</dbReference>
<dbReference type="NCBIfam" id="NF003449">
    <property type="entry name" value="PRK05014.1"/>
    <property type="match status" value="1"/>
</dbReference>
<dbReference type="PANTHER" id="PTHR14021">
    <property type="entry name" value="IRON-SULFUR CLUSTER CO-CHAPERONE PROTEIN HSCB"/>
    <property type="match status" value="1"/>
</dbReference>
<dbReference type="PANTHER" id="PTHR14021:SF15">
    <property type="entry name" value="IRON-SULFUR CLUSTER CO-CHAPERONE PROTEIN HSCB"/>
    <property type="match status" value="1"/>
</dbReference>
<dbReference type="Pfam" id="PF07743">
    <property type="entry name" value="HSCB_C"/>
    <property type="match status" value="1"/>
</dbReference>
<dbReference type="SMART" id="SM00271">
    <property type="entry name" value="DnaJ"/>
    <property type="match status" value="1"/>
</dbReference>
<dbReference type="SUPFAM" id="SSF46565">
    <property type="entry name" value="Chaperone J-domain"/>
    <property type="match status" value="1"/>
</dbReference>
<dbReference type="SUPFAM" id="SSF47144">
    <property type="entry name" value="HSC20 (HSCB), C-terminal oligomerisation domain"/>
    <property type="match status" value="1"/>
</dbReference>
<dbReference type="PROSITE" id="PS50076">
    <property type="entry name" value="DNAJ_2"/>
    <property type="match status" value="1"/>
</dbReference>
<name>HSCB_ALISL</name>
<evidence type="ECO:0000255" key="1">
    <source>
        <dbReference type="HAMAP-Rule" id="MF_00682"/>
    </source>
</evidence>
<proteinExistence type="inferred from homology"/>